<proteinExistence type="predicted"/>
<name>Y1070_SIRV1</name>
<dbReference type="EMBL" id="AJ414696">
    <property type="protein sequence ID" value="CAC93985.1"/>
    <property type="molecule type" value="Genomic_DNA"/>
</dbReference>
<dbReference type="EMBL" id="AJ748296">
    <property type="protein sequence ID" value="CAG38849.1"/>
    <property type="molecule type" value="Genomic_DNA"/>
</dbReference>
<dbReference type="RefSeq" id="NP_666618.1">
    <property type="nucleotide sequence ID" value="NC_004087.1"/>
</dbReference>
<dbReference type="KEGG" id="vg:951385"/>
<dbReference type="OrthoDB" id="76at10239"/>
<dbReference type="Proteomes" id="UP000002270">
    <property type="component" value="Genome"/>
</dbReference>
<dbReference type="Proteomes" id="UP000223181">
    <property type="component" value="Segment"/>
</dbReference>
<dbReference type="InterPro" id="IPR015940">
    <property type="entry name" value="UBA"/>
</dbReference>
<dbReference type="PROSITE" id="PS50030">
    <property type="entry name" value="UBA"/>
    <property type="match status" value="1"/>
</dbReference>
<organism>
    <name type="scientific">Sulfolobus islandicus rod-shaped virus 1</name>
    <name type="common">SIRV-1</name>
    <name type="synonym">Sulfolobus virus SIRV-1</name>
    <dbReference type="NCBI Taxonomy" id="157898"/>
    <lineage>
        <taxon>Viruses</taxon>
        <taxon>Adnaviria</taxon>
        <taxon>Zilligvirae</taxon>
        <taxon>Taleaviricota</taxon>
        <taxon>Tokiviricetes</taxon>
        <taxon>Ligamenvirales</taxon>
        <taxon>Rudiviridae</taxon>
        <taxon>Icerudivirus</taxon>
        <taxon>Icerudivirus SIRV1</taxon>
    </lineage>
</organism>
<gene>
    <name type="ORF">1070</name>
</gene>
<evidence type="ECO:0000255" key="1">
    <source>
        <dbReference type="PROSITE-ProRule" id="PRU00212"/>
    </source>
</evidence>
<organismHost>
    <name type="scientific">Saccharolobus islandicus</name>
    <name type="common">Sulfolobus islandicus</name>
    <dbReference type="NCBI Taxonomy" id="43080"/>
</organismHost>
<keyword id="KW-1185">Reference proteome</keyword>
<reference key="1">
    <citation type="journal article" date="2001" name="Virology">
        <title>Sequences and replication of genomes of the archaeal rudiviruses SIRV1 and SIRV2: relationships to the archaeal lipothrixvirus SIFV and some eukaryal viruses.</title>
        <authorList>
            <person name="Peng X."/>
            <person name="Blum H."/>
            <person name="She Q."/>
            <person name="Mallok S."/>
            <person name="Bruegger K."/>
            <person name="Garrett R.A."/>
            <person name="Zillig W."/>
            <person name="Prangishvili D."/>
        </authorList>
    </citation>
    <scope>NUCLEOTIDE SEQUENCE [LARGE SCALE GENOMIC DNA]</scope>
    <source>
        <strain>Isolate variant VIII</strain>
    </source>
</reference>
<reference key="2">
    <citation type="journal article" date="2004" name="Mol. Microbiol.">
        <title>Multiple variants of the archaeal DNA rudivirus SIRV1 in a single host and a novel mechanism of genomic variation.</title>
        <authorList>
            <person name="Peng X."/>
            <person name="Kessler A."/>
            <person name="Phan H."/>
            <person name="Garrett R.A."/>
            <person name="Prangishvili D."/>
        </authorList>
    </citation>
    <scope>NUCLEOTIDE SEQUENCE [LARGE SCALE GENOMIC DNA]</scope>
    <source>
        <strain>Isolate variant XX</strain>
    </source>
</reference>
<accession>Q8QL26</accession>
<accession>Q5TJ89</accession>
<feature type="chain" id="PRO_0000342306" description="Uncharacterized protein 1070">
    <location>
        <begin position="1"/>
        <end position="1070"/>
    </location>
</feature>
<feature type="domain" description="UBA" evidence="1">
    <location>
        <begin position="477"/>
        <end position="523"/>
    </location>
</feature>
<feature type="sequence variant" description="In strain: Isolate variant XX.">
    <original>I</original>
    <variation>V</variation>
    <location>
        <position position="106"/>
    </location>
</feature>
<feature type="sequence variant" description="In strain: Isolate variant XX.">
    <original>S</original>
    <variation>N</variation>
    <location>
        <position position="165"/>
    </location>
</feature>
<feature type="sequence variant" description="In strain: Isolate variant XX.">
    <original>E</original>
    <variation>Q</variation>
    <location>
        <position position="240"/>
    </location>
</feature>
<feature type="sequence variant" description="In strain: Isolate variant XX.">
    <original>Q</original>
    <variation>N</variation>
    <location>
        <position position="274"/>
    </location>
</feature>
<feature type="sequence variant" description="In strain: Isolate variant XX.">
    <original>R</original>
    <variation>K</variation>
    <location>
        <position position="293"/>
    </location>
</feature>
<feature type="sequence variant" description="In strain: Isolate variant XX.">
    <original>A</original>
    <variation>E</variation>
    <location>
        <position position="303"/>
    </location>
</feature>
<feature type="sequence variant" description="In strain: Isolate variant XX.">
    <original>VPK</original>
    <variation>APR</variation>
    <location>
        <begin position="318"/>
        <end position="320"/>
    </location>
</feature>
<feature type="sequence variant" description="In strain: Isolate variant XX.">
    <original>TGS</original>
    <variation>LGA</variation>
    <location>
        <begin position="334"/>
        <end position="336"/>
    </location>
</feature>
<feature type="sequence variant" description="In strain: Isolate variant XX.">
    <original>I</original>
    <variation>L</variation>
    <location>
        <position position="355"/>
    </location>
</feature>
<feature type="sequence variant" description="In strain: Isolate variant XX.">
    <original>L</original>
    <variation>I</variation>
    <location>
        <position position="371"/>
    </location>
</feature>
<feature type="sequence variant" description="In strain: Isolate variant XX.">
    <original>Q</original>
    <variation>E</variation>
    <location>
        <position position="388"/>
    </location>
</feature>
<feature type="sequence variant" description="In strain: Isolate variant XX.">
    <original>E</original>
    <variation>Q</variation>
    <location>
        <position position="392"/>
    </location>
</feature>
<feature type="sequence variant" description="In strain: Isolate variant XX.">
    <original>S</original>
    <variation>G</variation>
    <location>
        <position position="396"/>
    </location>
</feature>
<feature type="sequence variant" description="In strain: Isolate variant XX.">
    <original>K</original>
    <variation>R</variation>
    <location>
        <position position="439"/>
    </location>
</feature>
<feature type="sequence variant" description="In strain: Isolate variant XX.">
    <original>N</original>
    <variation>E</variation>
    <location>
        <position position="449"/>
    </location>
</feature>
<feature type="sequence variant" description="In strain: Isolate variant XX.">
    <original>D</original>
    <variation>E</variation>
    <location>
        <position position="457"/>
    </location>
</feature>
<feature type="sequence variant" description="In strain: Isolate variant XX.">
    <original>D</original>
    <variation>Y</variation>
    <location>
        <position position="479"/>
    </location>
</feature>
<feature type="sequence variant" description="In strain: Isolate variant XX.">
    <original>K</original>
    <variation>R</variation>
    <location>
        <position position="493"/>
    </location>
</feature>
<feature type="sequence variant" description="In strain: Isolate variant XX.">
    <original>N</original>
    <variation>D</variation>
    <location>
        <position position="498"/>
    </location>
</feature>
<feature type="sequence variant" description="In strain: Isolate variant XX.">
    <original>K</original>
    <variation>N</variation>
    <location>
        <position position="552"/>
    </location>
</feature>
<feature type="sequence variant" description="In strain: Isolate variant XX.">
    <original>L</original>
    <variation>I</variation>
    <location>
        <position position="557"/>
    </location>
</feature>
<feature type="sequence variant" description="In strain: Isolate variant XX.">
    <original>A</original>
    <variation>V</variation>
    <location>
        <position position="562"/>
    </location>
</feature>
<feature type="sequence variant" description="In strain: Isolate variant XX.">
    <original>VEQ</original>
    <variation>IEP</variation>
    <location>
        <begin position="573"/>
        <end position="575"/>
    </location>
</feature>
<feature type="sequence variant" description="In strain: Isolate variant XX.">
    <original>T</original>
    <variation>S</variation>
    <location>
        <position position="582"/>
    </location>
</feature>
<feature type="sequence variant" description="In strain: Isolate variant XX.">
    <original>F</original>
    <variation>L</variation>
    <location>
        <position position="628"/>
    </location>
</feature>
<feature type="sequence variant" description="In strain: Isolate variant XX.">
    <original>V</original>
    <variation>I</variation>
    <location>
        <position position="645"/>
    </location>
</feature>
<feature type="sequence variant" description="In strain: Isolate variant XX.">
    <original>H</original>
    <variation>Q</variation>
    <location>
        <position position="676"/>
    </location>
</feature>
<feature type="sequence variant" description="In strain: Isolate variant XX.">
    <original>LET</original>
    <variation>TES</variation>
    <location>
        <begin position="680"/>
        <end position="682"/>
    </location>
</feature>
<feature type="sequence variant" description="In strain: Isolate variant XX.">
    <original>E</original>
    <variation>G</variation>
    <location>
        <position position="699"/>
    </location>
</feature>
<feature type="sequence variant" description="In strain: Isolate variant XX.">
    <original>I</original>
    <variation>V</variation>
    <location>
        <position position="702"/>
    </location>
</feature>
<feature type="sequence variant" description="In strain: Isolate variant XX.">
    <original>F</original>
    <variation>L</variation>
    <location>
        <position position="715"/>
    </location>
</feature>
<feature type="sequence variant" description="In strain: Isolate variant XX.">
    <original>V</original>
    <variation>I</variation>
    <location>
        <position position="725"/>
    </location>
</feature>
<feature type="sequence variant" description="In strain: Isolate variant XX.">
    <original>V</original>
    <variation>L</variation>
    <location>
        <position position="729"/>
    </location>
</feature>
<feature type="sequence variant" description="In strain: Isolate variant XX.">
    <original>K</original>
    <variation>R</variation>
    <location>
        <position position="745"/>
    </location>
</feature>
<feature type="sequence variant" description="In strain: Isolate variant XX.">
    <original>D</original>
    <variation>E</variation>
    <location>
        <position position="749"/>
    </location>
</feature>
<feature type="sequence variant" description="In strain: Isolate variant XX.">
    <original>TD</original>
    <variation>DN</variation>
    <location>
        <begin position="780"/>
        <end position="781"/>
    </location>
</feature>
<feature type="sequence variant" description="In strain: Isolate variant XX.">
    <original>V</original>
    <variation>I</variation>
    <location>
        <position position="810"/>
    </location>
</feature>
<feature type="sequence variant" description="In strain: Isolate variant XX.">
    <original>I</original>
    <variation>V</variation>
    <location>
        <position position="830"/>
    </location>
</feature>
<feature type="sequence variant" description="In strain: Isolate variant XX.">
    <original>S</original>
    <variation>P</variation>
    <location>
        <position position="837"/>
    </location>
</feature>
<feature type="sequence variant" description="In strain: Isolate variant XX.">
    <original>R</original>
    <variation>K</variation>
    <location>
        <position position="840"/>
    </location>
</feature>
<feature type="sequence variant" description="In strain: Isolate variant XX.">
    <original>IKILLD</original>
    <variation>VKALLE</variation>
    <location>
        <begin position="849"/>
        <end position="854"/>
    </location>
</feature>
<feature type="sequence variant" description="In strain: Isolate variant XX.">
    <original>H</original>
    <variation>Y</variation>
    <location>
        <position position="868"/>
    </location>
</feature>
<feature type="sequence variant" description="In strain: Isolate variant XX.">
    <original>L</original>
    <variation>P</variation>
    <location>
        <position position="884"/>
    </location>
</feature>
<feature type="sequence variant" description="In strain: Isolate variant XX.">
    <original>IN</original>
    <variation>TS</variation>
    <location>
        <begin position="903"/>
        <end position="904"/>
    </location>
</feature>
<feature type="sequence variant" description="In strain: Isolate variant XX.">
    <original>V</original>
    <variation>I</variation>
    <location>
        <position position="911"/>
    </location>
</feature>
<feature type="sequence variant" description="In strain: Isolate variant XX.">
    <original>T</original>
    <variation>N</variation>
    <location>
        <position position="924"/>
    </location>
</feature>
<feature type="sequence variant" description="In strain: Isolate variant XX.">
    <original>N</original>
    <variation>S</variation>
    <location>
        <position position="937"/>
    </location>
</feature>
<feature type="sequence variant" description="In strain: Isolate variant XX.">
    <original>A</original>
    <variation>S</variation>
    <location>
        <position position="947"/>
    </location>
</feature>
<feature type="sequence variant" description="In strain: Isolate variant XX.">
    <original>I</original>
    <variation>M</variation>
    <location>
        <position position="952"/>
    </location>
</feature>
<feature type="sequence variant" description="In strain: Isolate variant XX.">
    <original>L</original>
    <variation>T</variation>
    <location>
        <position position="963"/>
    </location>
</feature>
<feature type="sequence variant" description="In strain: Isolate variant XX.">
    <original>K</original>
    <variation>R</variation>
    <location>
        <position position="1032"/>
    </location>
</feature>
<feature type="sequence variant" description="In strain: Isolate variant XX.">
    <original>G</original>
    <variation>N</variation>
    <location>
        <position position="1038"/>
    </location>
</feature>
<feature type="sequence variant" description="In strain: Isolate variant XX.">
    <original>I</original>
    <variation>L</variation>
    <location>
        <position position="1061"/>
    </location>
</feature>
<protein>
    <recommendedName>
        <fullName>Uncharacterized protein 1070</fullName>
    </recommendedName>
</protein>
<sequence length="1070" mass="123572">MFIILKRNILINMSFLLNLGELGTFFADEIENLENFTNWISSDFINFINAIVNDIKNIASFLGQAISDIPTFMVNIATNFLTILQNFVQTAISTIQGFVSWFEQQIVGAFEFLSSIASDFINSAYSFFQNVANVFAQIISGVISDFLNFFGANMKHISNAISQLSQFLSPFIAPITIGKFLPVIVDKLAEILPEIEIDLAPVGLGGKIPIKFGEIIKAFAETSVDFLNEIRTELATTLKEFIKEPFISDFKISAREIFNEIGLGDLPFADPPFQLIGRWVAVRSFDEVKDHLRETILLTGYPAWFTNAYLESPVNDFVPKNPLFRPVGIRDLITGSQYGILNISDLEKYAYNNLITPKTAKLMYQNQTARLLQRAVEQGIRQFVITPQKAYEEIISNINLTGKELFLKTFTLEYEYAVQRIVRQFLRSLLSRALSNFGKPYLDFKYLDNTIAKLFKDLGYPEEVRTVFDTMITQSQLIDTNQLLLRQLQQIVKLGIFNEKKIKEELKANKFNEQVALQILESELQFAQLQNTLKEYQFKLKSFLISPKDVEKDLKHLGFDSAIISALIYENQVEQLIKFQLTNIESLAKKGYLSLDEIKKQFKAIGIIKEYEDAFINFINQELQISAFLTILKSQLRQFQIDPKVAEAELKKLNINEYLSNQIIQEEYNINIAKLHLSVLETIAKTLYYDQQQLSGELEKIIKDKTALELYIKKFYYEYIYPKIVNYHVQLARHGILSDISKLPKEVIDYEIKPALLTYQTTLEIEYIKESLKDLEIKPTDAINELEKLGMQKDIAQLIVNTYIPTFYNVHTIIQNIIEGQLYKVGKVPINLGNAESELRKLGIPDSQIKILLDQYSTTFGLDIWRKHLPSISIIENAIKYNYLDQKLIEYSFIPSELLNLYINYYQHLLVGQEVQSFKSEYITALIYNYQNLQLENLLKQYGINEALLSVIKLFAQVRKIVLGLQELYLTPTKALSISEYVSNPQQLLQKVFTEFQIPQELQNTYFEYARNRRVSRYVNEIITTINLLFEKHKIDLGTAQSYLQQLKKYGLTDEEIQLIILNWQLRSAY</sequence>